<accession>Q8S8U1</accession>
<evidence type="ECO:0000250" key="1"/>
<evidence type="ECO:0000255" key="2"/>
<evidence type="ECO:0000305" key="3"/>
<geneLocation type="chloroplast"/>
<keyword id="KW-0067">ATP-binding</keyword>
<keyword id="KW-0150">Chloroplast</keyword>
<keyword id="KW-0547">Nucleotide-binding</keyword>
<keyword id="KW-0934">Plastid</keyword>
<comment type="function">
    <text>Probable ATPase of unknown function. Its presence in a non-photosynthetic plant (Epifagus virginiana) and experiments in tobacco indicate that it has an essential function which is probably not related to photosynthesis.</text>
</comment>
<comment type="subcellular location">
    <subcellularLocation>
        <location evidence="1">Plastid</location>
        <location evidence="1">Chloroplast stroma</location>
    </subcellularLocation>
</comment>
<comment type="similarity">
    <text evidence="3">Belongs to the Ycf2 family.</text>
</comment>
<comment type="caution">
    <text evidence="3">There are two genes for this protein in the chloroplast inverted repeat; while they are usually identical, in this organism they are not. The other copy is AC Q8S8V2.</text>
</comment>
<sequence>MRGHQFKSWILELREILREIKNSHHFLDSWTQFTSVGSFIHIFFHQERFLKLFDPRIWSILLSRNSQGSTSNRYFTIKGVILFVVAVLIYRINNRNMVERKNLYLIGLLPIPMNSIGPRNDTLEESVGSSNINRLIVSLLYLPKGKKISESCFLNPKESTWVLPITKKCSMPESNWGSRWWRNWIGKKRDSSCKISNETVAGIEILFKEKDLKYLEFLFVYYMDDPIRKDHDWELFDRLSLRKSRNRINLNSGPLFEILVKHWISYLMSAFREKIPIEVEGFFKQQGAGSTIQSNDIEHVSHLFSRNKWAISLQNCAQFHMWQFRQDLFVSWGKNPPESDFLRNVSRENWIWLDNVWLVNKDRFFSKVQNVSSNIQYDSTRSSFVQVTDSSQLKGSSDQSRDHLDSISNEDSEYHTLINQREIQQRKERSILWDPSFLQMERKEIESGRFPKCLSGYSSMSRLFTEREKQMINHLFPEEIEEFLGNPTRSVRSFFSDRWSELHLGSNPTERSTRDQKLLKKQQDLSFVPSRRSENKEMVNIFKIITYLQNTVSIHPISSDPGCDMVPKDEPDMDSSNKISFLNKNPFFDLFHLFHDRNRGGYTLHYDFESEERFQEMADLFTLSITEPDLVYHKGFAFSIDSCGLDQKQFLNEARDESKKKSLLVLPPIFYEENESFSRRIRKKWVRISCGNDLEDPKPKIVVFASNNIMEAVTQYRLIRNLIQIQYSTYGYIRNVLNRFFLMNRSDRNFEYGIQRDQIGKDTLNHRTIMKYTINQYLSNLKKSQKKWFEPLILISRTERSMNRDPDAYRYKWSNGSKNFQEHLEQSVSEQKSRFQVVFDRLRINQYSIDWSEVIDKKDLSKPLRFFLSKPLRFFLSKSLLFLSKLLFFLSNSLPFFCVSFGNIPIHRSEIYIYELKGPNDQLCNQLLESIGLQIVHLKKLKPFLLDDHDTSQKSKFLINGGTISPFLFNKIPKWMIDSFHTRNNRRKSFDNPDSNFSMIFHDQDNWLNPVKPFHRSSLISSFYKANRLRFLNNPHHFCFYWNTRFPFSVEKARINNSYFTYGQFLNILFIRNKIFSLCVGNKKHAFWGRDTISPIESQVSNIFIPNDFPQSGDETYNLYKSFHFPSRSDPFVRRAIYSIADISGTPLTEGQIVNFERTYCQPLSDMNLSDSEGKNLHQYLNFNSNMGLIHTPCSEKDLSSEKRKKRSLCLKKCVEKGQMYRTFQRDSAFSTLSKWNLFQTYMPWFLTSTGYKYLNLIFLDTFSDLLPILSSSQKFVSIFPDIMHGSGISWRILQKKLCLPQWNLISEISEISSKCLHNLLLSEEMIHRNNESPLISTHLRSPNAREFLYSILFLLLVAGYLVRTHLLFVSRASSELQTEFEKVKSLMIPSSMIELRKLLDRYPTSEPNSFWLKNLFLVALEQLGDSLEEIRGSASGGNMLGPAYGVKSIRSKKKDWNINLIEIIDLIPNPINRITFSRNTRHLSHTSKEIYSLIRKRKNVNGDWIDDKIESWVANSDSIADEEREFLVQFSTLTTENRIDQILLSLTHSDHLSKNDSGYQMIEQPGAIYLRYLVDIHKKHLMNYEFNPSCLAERRIFLAHYQTITYSQTSCGENSFHFPSHGKPFSLRLALSPSRGILVIGSIGTGRSYLVKYLATNSYVPFITVFLNKFLDNKPKGFLLDEIDIDDSDDIDDSDNLDASDDIGRDLDTELELLTRMNGLTMDMMPEIDRFYITLQFELAKAMSPCIIWIPNIHDLDVNESNDLSLGLLVNHLSRDCERCSTRNILVIASTHIPQKVDPALIAPNKLNTCIKIRRLLIPQQRKHFFTLSYTRGFHLEKKMFHTNGFGSITMGSNARDLVALTNEVLSISITQKKSIIDTNTIRSALHRQTWDLRSQVRSVQDHGILFYQIGRAVAQNVLLSNCPIDPISIYMKKKSCNEGDSYLYKWYFELGTSMKRLTILLYLLSCSAGSVAQDLWSLSGPDEKNGITSYGLVENDSDLVHGLLEVEGALVGSSRTEKDCSQFDNDRVTLLLRPEPRNPLDMMQKGSCSILDQRFLYEKYESEFEEGEGEGALDPQEDLFNHIVWAPRIWRPWGFLFDCIERPNELGFPYWSRSFRGKRIIYDEEDELQENDSGFLQSGTMQYQTRDRSSKEQGLFRISQFIWDPADPLFFLFKDQPPGSVFSHRELFADEEMSKGLLTSQTDPPTSIYKRWFIKNTQEKHFELLINRQRWLRTNSSLSNGSFRSNTLSESYQYLSNLFLSNGTLLDQMTKTLLRKRWLFPDEMKIGFM</sequence>
<gene>
    <name type="primary">ycf2-B</name>
</gene>
<feature type="chain" id="PRO_0000223051" description="Protein Ycf2 B">
    <location>
        <begin position="1"/>
        <end position="2291"/>
    </location>
</feature>
<feature type="binding site" evidence="2">
    <location>
        <begin position="1642"/>
        <end position="1649"/>
    </location>
    <ligand>
        <name>ATP</name>
        <dbReference type="ChEBI" id="CHEBI:30616"/>
    </ligand>
</feature>
<organism>
    <name type="scientific">Atropa belladonna</name>
    <name type="common">Belladonna</name>
    <name type="synonym">Deadly nightshade</name>
    <dbReference type="NCBI Taxonomy" id="33113"/>
    <lineage>
        <taxon>Eukaryota</taxon>
        <taxon>Viridiplantae</taxon>
        <taxon>Streptophyta</taxon>
        <taxon>Embryophyta</taxon>
        <taxon>Tracheophyta</taxon>
        <taxon>Spermatophyta</taxon>
        <taxon>Magnoliopsida</taxon>
        <taxon>eudicotyledons</taxon>
        <taxon>Gunneridae</taxon>
        <taxon>Pentapetalae</taxon>
        <taxon>asterids</taxon>
        <taxon>lamiids</taxon>
        <taxon>Solanales</taxon>
        <taxon>Solanaceae</taxon>
        <taxon>Solanoideae</taxon>
        <taxon>Hyoscyameae</taxon>
        <taxon>Atropa</taxon>
    </lineage>
</organism>
<dbReference type="EMBL" id="AJ316582">
    <property type="protein sequence ID" value="CAC88108.1"/>
    <property type="molecule type" value="Genomic_DNA"/>
</dbReference>
<dbReference type="GO" id="GO:0009570">
    <property type="term" value="C:chloroplast stroma"/>
    <property type="evidence" value="ECO:0007669"/>
    <property type="project" value="UniProtKB-SubCell"/>
</dbReference>
<dbReference type="GO" id="GO:0005524">
    <property type="term" value="F:ATP binding"/>
    <property type="evidence" value="ECO:0007669"/>
    <property type="project" value="UniProtKB-KW"/>
</dbReference>
<dbReference type="GO" id="GO:0016887">
    <property type="term" value="F:ATP hydrolysis activity"/>
    <property type="evidence" value="ECO:0007669"/>
    <property type="project" value="InterPro"/>
</dbReference>
<dbReference type="CDD" id="cd19505">
    <property type="entry name" value="RecA-like_Ycf2"/>
    <property type="match status" value="1"/>
</dbReference>
<dbReference type="Gene3D" id="3.40.50.300">
    <property type="entry name" value="P-loop containing nucleotide triphosphate hydrolases"/>
    <property type="match status" value="1"/>
</dbReference>
<dbReference type="HAMAP" id="MF_01330">
    <property type="entry name" value="Ycf2"/>
    <property type="match status" value="1"/>
</dbReference>
<dbReference type="InterPro" id="IPR003593">
    <property type="entry name" value="AAA+_ATPase"/>
</dbReference>
<dbReference type="InterPro" id="IPR003959">
    <property type="entry name" value="ATPase_AAA_core"/>
</dbReference>
<dbReference type="InterPro" id="IPR027417">
    <property type="entry name" value="P-loop_NTPase"/>
</dbReference>
<dbReference type="InterPro" id="IPR008543">
    <property type="entry name" value="Uncharacterised_Ycf2"/>
</dbReference>
<dbReference type="InterPro" id="IPR056777">
    <property type="entry name" value="Ycf2_N"/>
</dbReference>
<dbReference type="PANTHER" id="PTHR33078:SF51">
    <property type="entry name" value="PROTEIN TIC 214"/>
    <property type="match status" value="1"/>
</dbReference>
<dbReference type="PANTHER" id="PTHR33078">
    <property type="entry name" value="PROTEIN YCF2-RELATED"/>
    <property type="match status" value="1"/>
</dbReference>
<dbReference type="Pfam" id="PF00004">
    <property type="entry name" value="AAA"/>
    <property type="match status" value="1"/>
</dbReference>
<dbReference type="Pfam" id="PF05695">
    <property type="entry name" value="Ycf2"/>
    <property type="match status" value="1"/>
</dbReference>
<dbReference type="SMART" id="SM00382">
    <property type="entry name" value="AAA"/>
    <property type="match status" value="1"/>
</dbReference>
<dbReference type="SUPFAM" id="SSF52540">
    <property type="entry name" value="P-loop containing nucleoside triphosphate hydrolases"/>
    <property type="match status" value="1"/>
</dbReference>
<reference key="1">
    <citation type="journal article" date="2002" name="Mol. Biol. Evol.">
        <title>The plastid chromosome of Atropa belladonna and its comparison with that of Nicotiana tabacum: the role of RNA editing in generating divergence in the process of plant speciation.</title>
        <authorList>
            <person name="Schmitz-Linneweber C."/>
            <person name="Regel R."/>
            <person name="Du T.G."/>
            <person name="Hupfer H."/>
            <person name="Herrmann R.G."/>
            <person name="Maier R.M."/>
        </authorList>
    </citation>
    <scope>NUCLEOTIDE SEQUENCE [LARGE SCALE GENOMIC DNA]</scope>
    <source>
        <strain>cv. Ab5p(kan)</strain>
    </source>
</reference>
<protein>
    <recommendedName>
        <fullName>Protein Ycf2 B</fullName>
    </recommendedName>
</protein>
<name>YCF2B_ATRBE</name>
<proteinExistence type="inferred from homology"/>